<keyword id="KW-0030">Aminoacyl-tRNA synthetase</keyword>
<keyword id="KW-0067">ATP-binding</keyword>
<keyword id="KW-0963">Cytoplasm</keyword>
<keyword id="KW-0436">Ligase</keyword>
<keyword id="KW-0479">Metal-binding</keyword>
<keyword id="KW-0547">Nucleotide-binding</keyword>
<keyword id="KW-0648">Protein biosynthesis</keyword>
<keyword id="KW-0862">Zinc</keyword>
<name>SYI_RICFE</name>
<organism>
    <name type="scientific">Rickettsia felis (strain ATCC VR-1525 / URRWXCal2)</name>
    <name type="common">Rickettsia azadi</name>
    <dbReference type="NCBI Taxonomy" id="315456"/>
    <lineage>
        <taxon>Bacteria</taxon>
        <taxon>Pseudomonadati</taxon>
        <taxon>Pseudomonadota</taxon>
        <taxon>Alphaproteobacteria</taxon>
        <taxon>Rickettsiales</taxon>
        <taxon>Rickettsiaceae</taxon>
        <taxon>Rickettsieae</taxon>
        <taxon>Rickettsia</taxon>
        <taxon>spotted fever group</taxon>
    </lineage>
</organism>
<feature type="chain" id="PRO_0000098559" description="Isoleucine--tRNA ligase">
    <location>
        <begin position="1"/>
        <end position="1094"/>
    </location>
</feature>
<feature type="short sequence motif" description="'HIGH' region">
    <location>
        <begin position="53"/>
        <end position="63"/>
    </location>
</feature>
<feature type="short sequence motif" description="'KMSKS' region">
    <location>
        <begin position="624"/>
        <end position="628"/>
    </location>
</feature>
<feature type="binding site" evidence="1">
    <location>
        <position position="627"/>
    </location>
    <ligand>
        <name>ATP</name>
        <dbReference type="ChEBI" id="CHEBI:30616"/>
    </ligand>
</feature>
<sequence>MTNTKYYPEVSSNADFAAIEREILKFWQDNNIFQKSIDDRNGESEFIFYDGPPFANGLPHYGHLLTGFIKDVYARYQTVKGKKVERRFGWDCHGLPAEMQSEKELGISGRLAITNFGIEKFNSHCRASVMKYASDWEEYVTRQARWVDFKNSYKTMDKNFMESVIWAFKELYNKGLLYESMRVMPYSWACETPLSNFETRLDNSYRERADKAVTVSFVLNEIPAINGMTSRESGTTSSGDYKEYRILAWTTTPWTLPSNLALAVGSDIDYASIPKEDICYIIAASSVSKYAKELGLSGEENFEIIKGSALQGLSYKPLFDYFANHPNSFKIFAGDFVVEGDGTGIVHMAPGFGEDDQILCESKGISLVCPVDNSGKFTKEIPDLEGVQVFDANDKIIIKLKEQGNWLKTEQYIHNYPHCWRTDTPLIYKAVPSWYVKVTQFKDRMVELNQQINWIPFHVKDNLFGKWLENARDWSISRNRFWGTPLPVWKSDDPKYPRIDVYGSIEELEKDFGVKVTDLHRPFIDELARPNPNDPTGKSTMRRIEDVFDCWFESGSMPYGQAHYPFENKKWFEDHFPADFIVEYSAQTRGWFYTLMVLSTALFDRPPFLNCICHGVILDATGQKLSKRLNNYADPLELFDKYGSDALRVTMLSSNVVKGQELLIDKDGKMVFDTLRLFIKPIWNAYHFFTMYANADSLKGELNFASQNVLDIYILSKLKIAVNKIEESLDNFDTQTAYHAVSEFFEVLNNWYIRRSRARFWKSEKDADKQNAYNTLYSCLETMAIAMSALVPMISEAIYLGLCHKRPDVIARKDLSLDEAISGNSHEIATALSVPRNDGSISVHLCNYPNLSSFEINHELVATMDNVLDICSNSLFIRSTENIRVRQPLATITIISKHNDKLKSFEDLIKDEINVKSVIYRDDLENYASKKLSINFPMLGKRLPAKMKEIIAASKKGEWEAIGGGLAICDETLNSDEYKLVLEPHVHIKGAASFENNSSLLILDLELTAELIEEGYARDIVRFIQQARKDADFSITDRILIEIISEFDLSKIIDNYGDFIKEQTLGEFSKNFTPDYVSKVELENHQIQLKVKRS</sequence>
<accession>Q4UMD8</accession>
<evidence type="ECO:0000255" key="1">
    <source>
        <dbReference type="HAMAP-Rule" id="MF_02003"/>
    </source>
</evidence>
<protein>
    <recommendedName>
        <fullName evidence="1">Isoleucine--tRNA ligase</fullName>
        <ecNumber evidence="1">6.1.1.5</ecNumber>
    </recommendedName>
    <alternativeName>
        <fullName evidence="1">Isoleucyl-tRNA synthetase</fullName>
        <shortName evidence="1">IleRS</shortName>
    </alternativeName>
</protein>
<gene>
    <name evidence="1" type="primary">ileS</name>
    <name type="ordered locus">RF_0423</name>
</gene>
<reference key="1">
    <citation type="journal article" date="2005" name="PLoS Biol.">
        <title>The genome sequence of Rickettsia felis identifies the first putative conjugative plasmid in an obligate intracellular parasite.</title>
        <authorList>
            <person name="Ogata H."/>
            <person name="Renesto P."/>
            <person name="Audic S."/>
            <person name="Robert C."/>
            <person name="Blanc G."/>
            <person name="Fournier P.-E."/>
            <person name="Parinello H."/>
            <person name="Claverie J.-M."/>
            <person name="Raoult D."/>
        </authorList>
    </citation>
    <scope>NUCLEOTIDE SEQUENCE [LARGE SCALE GENOMIC DNA]</scope>
    <source>
        <strain>ATCC VR-1525 / URRWXCal2</strain>
    </source>
</reference>
<proteinExistence type="inferred from homology"/>
<comment type="function">
    <text evidence="1">Catalyzes the attachment of isoleucine to tRNA(Ile). As IleRS can inadvertently accommodate and process structurally similar amino acids such as valine, to avoid such errors it has two additional distinct tRNA(Ile)-dependent editing activities. One activity is designated as 'pretransfer' editing and involves the hydrolysis of activated Val-AMP. The other activity is designated 'posttransfer' editing and involves deacylation of mischarged Val-tRNA(Ile).</text>
</comment>
<comment type="catalytic activity">
    <reaction evidence="1">
        <text>tRNA(Ile) + L-isoleucine + ATP = L-isoleucyl-tRNA(Ile) + AMP + diphosphate</text>
        <dbReference type="Rhea" id="RHEA:11060"/>
        <dbReference type="Rhea" id="RHEA-COMP:9666"/>
        <dbReference type="Rhea" id="RHEA-COMP:9695"/>
        <dbReference type="ChEBI" id="CHEBI:30616"/>
        <dbReference type="ChEBI" id="CHEBI:33019"/>
        <dbReference type="ChEBI" id="CHEBI:58045"/>
        <dbReference type="ChEBI" id="CHEBI:78442"/>
        <dbReference type="ChEBI" id="CHEBI:78528"/>
        <dbReference type="ChEBI" id="CHEBI:456215"/>
        <dbReference type="EC" id="6.1.1.5"/>
    </reaction>
</comment>
<comment type="cofactor">
    <cofactor evidence="1">
        <name>Zn(2+)</name>
        <dbReference type="ChEBI" id="CHEBI:29105"/>
    </cofactor>
</comment>
<comment type="subunit">
    <text evidence="1">Monomer.</text>
</comment>
<comment type="subcellular location">
    <subcellularLocation>
        <location evidence="1">Cytoplasm</location>
    </subcellularLocation>
</comment>
<comment type="domain">
    <text evidence="1">IleRS has two distinct active sites: one for aminoacylation and one for editing. The misactivated valine is translocated from the active site to the editing site, which sterically excludes the correctly activated isoleucine. The single editing site contains two valyl binding pockets, one specific for each substrate (Val-AMP or Val-tRNA(Ile)).</text>
</comment>
<comment type="similarity">
    <text evidence="1">Belongs to the class-I aminoacyl-tRNA synthetase family. IleS type 2 subfamily.</text>
</comment>
<dbReference type="EC" id="6.1.1.5" evidence="1"/>
<dbReference type="EMBL" id="CP000053">
    <property type="protein sequence ID" value="AAY61274.1"/>
    <property type="molecule type" value="Genomic_DNA"/>
</dbReference>
<dbReference type="SMR" id="Q4UMD8"/>
<dbReference type="STRING" id="315456.RF_0423"/>
<dbReference type="KEGG" id="rfe:RF_0423"/>
<dbReference type="eggNOG" id="COG0060">
    <property type="taxonomic scope" value="Bacteria"/>
</dbReference>
<dbReference type="HOGENOM" id="CLU_001493_1_1_5"/>
<dbReference type="OrthoDB" id="9810365at2"/>
<dbReference type="Proteomes" id="UP000008548">
    <property type="component" value="Chromosome"/>
</dbReference>
<dbReference type="GO" id="GO:0005737">
    <property type="term" value="C:cytoplasm"/>
    <property type="evidence" value="ECO:0007669"/>
    <property type="project" value="UniProtKB-SubCell"/>
</dbReference>
<dbReference type="GO" id="GO:0002161">
    <property type="term" value="F:aminoacyl-tRNA deacylase activity"/>
    <property type="evidence" value="ECO:0007669"/>
    <property type="project" value="InterPro"/>
</dbReference>
<dbReference type="GO" id="GO:0005524">
    <property type="term" value="F:ATP binding"/>
    <property type="evidence" value="ECO:0007669"/>
    <property type="project" value="UniProtKB-UniRule"/>
</dbReference>
<dbReference type="GO" id="GO:0004822">
    <property type="term" value="F:isoleucine-tRNA ligase activity"/>
    <property type="evidence" value="ECO:0007669"/>
    <property type="project" value="UniProtKB-UniRule"/>
</dbReference>
<dbReference type="GO" id="GO:0000049">
    <property type="term" value="F:tRNA binding"/>
    <property type="evidence" value="ECO:0007669"/>
    <property type="project" value="InterPro"/>
</dbReference>
<dbReference type="GO" id="GO:0008270">
    <property type="term" value="F:zinc ion binding"/>
    <property type="evidence" value="ECO:0007669"/>
    <property type="project" value="UniProtKB-UniRule"/>
</dbReference>
<dbReference type="GO" id="GO:0006428">
    <property type="term" value="P:isoleucyl-tRNA aminoacylation"/>
    <property type="evidence" value="ECO:0007669"/>
    <property type="project" value="UniProtKB-UniRule"/>
</dbReference>
<dbReference type="CDD" id="cd07961">
    <property type="entry name" value="Anticodon_Ia_Ile_ABEc"/>
    <property type="match status" value="1"/>
</dbReference>
<dbReference type="CDD" id="cd00818">
    <property type="entry name" value="IleRS_core"/>
    <property type="match status" value="1"/>
</dbReference>
<dbReference type="FunFam" id="3.40.50.620:FF:000205">
    <property type="entry name" value="Isoleucine--tRNA ligase"/>
    <property type="match status" value="1"/>
</dbReference>
<dbReference type="FunFam" id="3.40.50.620:FF:000241">
    <property type="entry name" value="Isoleucine--tRNA ligase"/>
    <property type="match status" value="1"/>
</dbReference>
<dbReference type="Gene3D" id="3.40.50.620">
    <property type="entry name" value="HUPs"/>
    <property type="match status" value="2"/>
</dbReference>
<dbReference type="Gene3D" id="1.10.730.10">
    <property type="entry name" value="Isoleucyl-tRNA Synthetase, Domain 1"/>
    <property type="match status" value="1"/>
</dbReference>
<dbReference type="HAMAP" id="MF_02003">
    <property type="entry name" value="Ile_tRNA_synth_type2"/>
    <property type="match status" value="1"/>
</dbReference>
<dbReference type="InterPro" id="IPR001412">
    <property type="entry name" value="aa-tRNA-synth_I_CS"/>
</dbReference>
<dbReference type="InterPro" id="IPR002300">
    <property type="entry name" value="aa-tRNA-synth_Ia"/>
</dbReference>
<dbReference type="InterPro" id="IPR033709">
    <property type="entry name" value="Anticodon_Ile_ABEc"/>
</dbReference>
<dbReference type="InterPro" id="IPR002301">
    <property type="entry name" value="Ile-tRNA-ligase"/>
</dbReference>
<dbReference type="InterPro" id="IPR023586">
    <property type="entry name" value="Ile-tRNA-ligase_type2"/>
</dbReference>
<dbReference type="InterPro" id="IPR013155">
    <property type="entry name" value="M/V/L/I-tRNA-synth_anticd-bd"/>
</dbReference>
<dbReference type="InterPro" id="IPR014729">
    <property type="entry name" value="Rossmann-like_a/b/a_fold"/>
</dbReference>
<dbReference type="InterPro" id="IPR009080">
    <property type="entry name" value="tRNAsynth_Ia_anticodon-bd"/>
</dbReference>
<dbReference type="InterPro" id="IPR009008">
    <property type="entry name" value="Val/Leu/Ile-tRNA-synth_edit"/>
</dbReference>
<dbReference type="NCBIfam" id="TIGR00392">
    <property type="entry name" value="ileS"/>
    <property type="match status" value="1"/>
</dbReference>
<dbReference type="PANTHER" id="PTHR42780:SF1">
    <property type="entry name" value="ISOLEUCINE--TRNA LIGASE, CYTOPLASMIC"/>
    <property type="match status" value="1"/>
</dbReference>
<dbReference type="PANTHER" id="PTHR42780">
    <property type="entry name" value="SOLEUCYL-TRNA SYNTHETASE"/>
    <property type="match status" value="1"/>
</dbReference>
<dbReference type="Pfam" id="PF08264">
    <property type="entry name" value="Anticodon_1"/>
    <property type="match status" value="1"/>
</dbReference>
<dbReference type="Pfam" id="PF19302">
    <property type="entry name" value="DUF5915"/>
    <property type="match status" value="1"/>
</dbReference>
<dbReference type="Pfam" id="PF00133">
    <property type="entry name" value="tRNA-synt_1"/>
    <property type="match status" value="1"/>
</dbReference>
<dbReference type="PRINTS" id="PR00984">
    <property type="entry name" value="TRNASYNTHILE"/>
</dbReference>
<dbReference type="SUPFAM" id="SSF47323">
    <property type="entry name" value="Anticodon-binding domain of a subclass of class I aminoacyl-tRNA synthetases"/>
    <property type="match status" value="1"/>
</dbReference>
<dbReference type="SUPFAM" id="SSF52374">
    <property type="entry name" value="Nucleotidylyl transferase"/>
    <property type="match status" value="1"/>
</dbReference>
<dbReference type="SUPFAM" id="SSF50677">
    <property type="entry name" value="ValRS/IleRS/LeuRS editing domain"/>
    <property type="match status" value="1"/>
</dbReference>
<dbReference type="PROSITE" id="PS00178">
    <property type="entry name" value="AA_TRNA_LIGASE_I"/>
    <property type="match status" value="1"/>
</dbReference>